<comment type="subcellular location">
    <subcellularLocation>
        <location evidence="1">Cytoplasm</location>
    </subcellularLocation>
</comment>
<comment type="similarity">
    <text evidence="1">Belongs to the methyltransferase superfamily. TrmY family.</text>
</comment>
<name>TRMYL_SHEB5</name>
<gene>
    <name type="ordered locus">Sbal_2539</name>
</gene>
<proteinExistence type="inferred from homology"/>
<organism>
    <name type="scientific">Shewanella baltica (strain OS155 / ATCC BAA-1091)</name>
    <dbReference type="NCBI Taxonomy" id="325240"/>
    <lineage>
        <taxon>Bacteria</taxon>
        <taxon>Pseudomonadati</taxon>
        <taxon>Pseudomonadota</taxon>
        <taxon>Gammaproteobacteria</taxon>
        <taxon>Alteromonadales</taxon>
        <taxon>Shewanellaceae</taxon>
        <taxon>Shewanella</taxon>
    </lineage>
</organism>
<accession>A3D5L9</accession>
<reference key="1">
    <citation type="submission" date="2007-02" db="EMBL/GenBank/DDBJ databases">
        <title>Complete sequence of chromosome of Shewanella baltica OS155.</title>
        <authorList>
            <consortium name="US DOE Joint Genome Institute"/>
            <person name="Copeland A."/>
            <person name="Lucas S."/>
            <person name="Lapidus A."/>
            <person name="Barry K."/>
            <person name="Detter J.C."/>
            <person name="Glavina del Rio T."/>
            <person name="Hammon N."/>
            <person name="Israni S."/>
            <person name="Dalin E."/>
            <person name="Tice H."/>
            <person name="Pitluck S."/>
            <person name="Sims D.R."/>
            <person name="Brettin T."/>
            <person name="Bruce D."/>
            <person name="Han C."/>
            <person name="Tapia R."/>
            <person name="Brainard J."/>
            <person name="Schmutz J."/>
            <person name="Larimer F."/>
            <person name="Land M."/>
            <person name="Hauser L."/>
            <person name="Kyrpides N."/>
            <person name="Mikhailova N."/>
            <person name="Brettar I."/>
            <person name="Klappenbach J."/>
            <person name="Konstantinidis K."/>
            <person name="Rodrigues J."/>
            <person name="Tiedje J."/>
            <person name="Richardson P."/>
        </authorList>
    </citation>
    <scope>NUCLEOTIDE SEQUENCE [LARGE SCALE GENOMIC DNA]</scope>
    <source>
        <strain>OS155 / ATCC BAA-1091</strain>
    </source>
</reference>
<evidence type="ECO:0000255" key="1">
    <source>
        <dbReference type="HAMAP-Rule" id="MF_00587"/>
    </source>
</evidence>
<feature type="chain" id="PRO_1000129783" description="Putative pseudouridine methyltransferase">
    <location>
        <begin position="1"/>
        <end position="198"/>
    </location>
</feature>
<feature type="binding site" evidence="1">
    <location>
        <position position="132"/>
    </location>
    <ligand>
        <name>S-adenosyl-L-methionine</name>
        <dbReference type="ChEBI" id="CHEBI:59789"/>
    </ligand>
</feature>
<feature type="binding site" evidence="1">
    <location>
        <position position="186"/>
    </location>
    <ligand>
        <name>S-adenosyl-L-methionine</name>
        <dbReference type="ChEBI" id="CHEBI:59789"/>
    </ligand>
</feature>
<dbReference type="EC" id="2.1.1.-" evidence="1"/>
<dbReference type="EMBL" id="CP000563">
    <property type="protein sequence ID" value="ABN62032.1"/>
    <property type="molecule type" value="Genomic_DNA"/>
</dbReference>
<dbReference type="SMR" id="A3D5L9"/>
<dbReference type="STRING" id="325240.Sbal_2539"/>
<dbReference type="KEGG" id="sbl:Sbal_2539"/>
<dbReference type="HOGENOM" id="CLU_107018_0_0_6"/>
<dbReference type="OrthoDB" id="6019967at2"/>
<dbReference type="Proteomes" id="UP000001557">
    <property type="component" value="Chromosome"/>
</dbReference>
<dbReference type="GO" id="GO:0005737">
    <property type="term" value="C:cytoplasm"/>
    <property type="evidence" value="ECO:0007669"/>
    <property type="project" value="UniProtKB-SubCell"/>
</dbReference>
<dbReference type="GO" id="GO:0008757">
    <property type="term" value="F:S-adenosylmethionine-dependent methyltransferase activity"/>
    <property type="evidence" value="ECO:0007669"/>
    <property type="project" value="UniProtKB-UniRule"/>
</dbReference>
<dbReference type="GO" id="GO:0008175">
    <property type="term" value="F:tRNA methyltransferase activity"/>
    <property type="evidence" value="ECO:0007669"/>
    <property type="project" value="InterPro"/>
</dbReference>
<dbReference type="GO" id="GO:0030488">
    <property type="term" value="P:tRNA methylation"/>
    <property type="evidence" value="ECO:0007669"/>
    <property type="project" value="TreeGrafter"/>
</dbReference>
<dbReference type="CDD" id="cd18087">
    <property type="entry name" value="TrmY-like"/>
    <property type="match status" value="1"/>
</dbReference>
<dbReference type="Gene3D" id="3.40.1280.10">
    <property type="match status" value="1"/>
</dbReference>
<dbReference type="HAMAP" id="MF_00587">
    <property type="entry name" value="tRNA_methyltr_TrmY"/>
    <property type="match status" value="1"/>
</dbReference>
<dbReference type="InterPro" id="IPR029028">
    <property type="entry name" value="Alpha/beta_knot_MTases"/>
</dbReference>
<dbReference type="InterPro" id="IPR007158">
    <property type="entry name" value="TrmY"/>
</dbReference>
<dbReference type="InterPro" id="IPR029026">
    <property type="entry name" value="tRNA_m1G_MTases_N"/>
</dbReference>
<dbReference type="NCBIfam" id="NF002560">
    <property type="entry name" value="PRK02135.1"/>
    <property type="match status" value="1"/>
</dbReference>
<dbReference type="PANTHER" id="PTHR40703">
    <property type="entry name" value="TRNA (PSEUDOURIDINE(54)-N(1))-METHYLTRANSFERASE"/>
    <property type="match status" value="1"/>
</dbReference>
<dbReference type="PANTHER" id="PTHR40703:SF1">
    <property type="entry name" value="TRNA (PSEUDOURIDINE(54)-N(1))-METHYLTRANSFERASE"/>
    <property type="match status" value="1"/>
</dbReference>
<dbReference type="Pfam" id="PF04013">
    <property type="entry name" value="Methyltrn_RNA_2"/>
    <property type="match status" value="1"/>
</dbReference>
<dbReference type="SUPFAM" id="SSF75217">
    <property type="entry name" value="alpha/beta knot"/>
    <property type="match status" value="1"/>
</dbReference>
<sequence>MRAFVLRARSAPTDSQLFLASVGQEAHTEILAHTLMNTIFVAQSHRNDVVVYLVLESTHDFSRTICFDTRNICHIGGFHEQALLTKIAKALDISRGMTKEQTRVVDEGITVSTISFEKLVQDLAVDYQLFMMDKKGTSIREQEFVGNPCFLLTDHIPMPKKSFNTLKRLGAQKISLGPKMLFASQCVVLIHNELDINQ</sequence>
<protein>
    <recommendedName>
        <fullName evidence="1">Putative pseudouridine methyltransferase</fullName>
        <ecNumber evidence="1">2.1.1.-</ecNumber>
    </recommendedName>
</protein>
<keyword id="KW-0963">Cytoplasm</keyword>
<keyword id="KW-0489">Methyltransferase</keyword>
<keyword id="KW-1185">Reference proteome</keyword>
<keyword id="KW-0949">S-adenosyl-L-methionine</keyword>
<keyword id="KW-0808">Transferase</keyword>